<dbReference type="EMBL" id="U31788">
    <property type="protein sequence ID" value="AAA79463.1"/>
    <property type="molecule type" value="Genomic_DNA"/>
</dbReference>
<dbReference type="EMBL" id="U12493">
    <property type="protein sequence ID" value="AAA67237.1"/>
    <property type="molecule type" value="Genomic_DNA"/>
</dbReference>
<dbReference type="SMR" id="P50816"/>
<dbReference type="Proteomes" id="UP000009123">
    <property type="component" value="Genome"/>
</dbReference>
<dbReference type="GO" id="GO:0042025">
    <property type="term" value="C:host cell nucleus"/>
    <property type="evidence" value="ECO:0007669"/>
    <property type="project" value="UniProtKB-SubCell"/>
</dbReference>
<dbReference type="GO" id="GO:0039620">
    <property type="term" value="C:T=7 icosahedral viral capsid"/>
    <property type="evidence" value="ECO:0007669"/>
    <property type="project" value="UniProtKB-UniRule"/>
</dbReference>
<dbReference type="GO" id="GO:0005198">
    <property type="term" value="F:structural molecule activity"/>
    <property type="evidence" value="ECO:0007669"/>
    <property type="project" value="UniProtKB-UniRule"/>
</dbReference>
<dbReference type="GO" id="GO:0075509">
    <property type="term" value="P:endocytosis involved in viral entry into host cell"/>
    <property type="evidence" value="ECO:0007669"/>
    <property type="project" value="UniProtKB-KW"/>
</dbReference>
<dbReference type="GO" id="GO:0019062">
    <property type="term" value="P:virion attachment to host cell"/>
    <property type="evidence" value="ECO:0007669"/>
    <property type="project" value="UniProtKB-UniRule"/>
</dbReference>
<dbReference type="Gene3D" id="2.60.175.20">
    <property type="entry name" value="Major capsid L1 (late) superfamily, Papillomavirus"/>
    <property type="match status" value="2"/>
</dbReference>
<dbReference type="HAMAP" id="MF_04002">
    <property type="entry name" value="PPV_L1"/>
    <property type="match status" value="1"/>
</dbReference>
<dbReference type="InterPro" id="IPR002210">
    <property type="entry name" value="Capsid_L1_Papillomavir"/>
</dbReference>
<dbReference type="InterPro" id="IPR036973">
    <property type="entry name" value="Capsid_L1_sf_Papillomavir"/>
</dbReference>
<dbReference type="InterPro" id="IPR011222">
    <property type="entry name" value="dsDNA_vir_gr_I_capsid"/>
</dbReference>
<dbReference type="Pfam" id="PF00500">
    <property type="entry name" value="Late_protein_L1"/>
    <property type="match status" value="1"/>
</dbReference>
<dbReference type="PRINTS" id="PR00865">
    <property type="entry name" value="HPVCAPSIDL1"/>
</dbReference>
<dbReference type="SUPFAM" id="SSF88648">
    <property type="entry name" value="Group I dsDNA viruses"/>
    <property type="match status" value="1"/>
</dbReference>
<protein>
    <recommendedName>
        <fullName evidence="1">Major capsid protein L1</fullName>
    </recommendedName>
</protein>
<organism>
    <name type="scientific">Human papillomavirus 44</name>
    <dbReference type="NCBI Taxonomy" id="10592"/>
    <lineage>
        <taxon>Viruses</taxon>
        <taxon>Monodnaviria</taxon>
        <taxon>Shotokuvirae</taxon>
        <taxon>Cossaviricota</taxon>
        <taxon>Papovaviricetes</taxon>
        <taxon>Zurhausenvirales</taxon>
        <taxon>Papillomaviridae</taxon>
        <taxon>Firstpapillomavirinae</taxon>
        <taxon>Alphapapillomavirus</taxon>
        <taxon>Alphapapillomavirus 10</taxon>
    </lineage>
</organism>
<organismHost>
    <name type="scientific">Homo sapiens</name>
    <name type="common">Human</name>
    <dbReference type="NCBI Taxonomy" id="9606"/>
</organismHost>
<gene>
    <name evidence="1" type="primary">L1</name>
</gene>
<keyword id="KW-0167">Capsid protein</keyword>
<keyword id="KW-1015">Disulfide bond</keyword>
<keyword id="KW-1048">Host nucleus</keyword>
<keyword id="KW-0945">Host-virus interaction</keyword>
<keyword id="KW-0426">Late protein</keyword>
<keyword id="KW-1185">Reference proteome</keyword>
<keyword id="KW-1145">T=7 icosahedral capsid protein</keyword>
<keyword id="KW-1161">Viral attachment to host cell</keyword>
<keyword id="KW-1162">Viral penetration into host cytoplasm</keyword>
<keyword id="KW-0946">Virion</keyword>
<keyword id="KW-1164">Virus endocytosis by host</keyword>
<keyword id="KW-1160">Virus entry into host cell</keyword>
<proteinExistence type="inferred from homology"/>
<evidence type="ECO:0000255" key="1">
    <source>
        <dbReference type="HAMAP-Rule" id="MF_04002"/>
    </source>
</evidence>
<evidence type="ECO:0000256" key="2">
    <source>
        <dbReference type="SAM" id="MobiDB-lite"/>
    </source>
</evidence>
<feature type="chain" id="PRO_0000133528" description="Major capsid protein L1">
    <location>
        <begin position="1"/>
        <end position="500"/>
    </location>
</feature>
<feature type="region of interest" description="Disordered" evidence="2">
    <location>
        <begin position="473"/>
        <end position="500"/>
    </location>
</feature>
<feature type="disulfide bond" description="Interchain (with C-425)" evidence="1">
    <location>
        <position position="172"/>
    </location>
</feature>
<feature type="disulfide bond" description="Interchain (with C-172)" evidence="1">
    <location>
        <position position="425"/>
    </location>
</feature>
<sequence length="500" mass="55850">MWRPSENQVYVPPPAPVSKVIPTDAYVKRTNIYYHASSSRLLAVGNPYFAIRPANKTLVPKVSGFQYRVFKMVLPDPNKFALPDTSIYDPTTQRLVWACIGLEVGRGQPLGVGISGHPLLNKLDDVENSASYAAGPGQDNRVNVAMDYKQTQLCLVGCAPPLGEHWGKGKQCNNVSVKDGDCPPLELITSVIEDGDMVDTGFGAMNFAELQPNKSDVPLDICTATCKYPDYLQMAADPYGDRLFFYLRKEQMFARHFFNRAGTVGEDVSQDLVIKSASKNTVPNAIYFNTPSGSLVSSETQLFNKPFWLQKAQGHNNGICWGNQLFVTVVDTTRSTNMTICAATTQSPPSTYTSEQYKQYMRHVEEFDLQFMFQLCSITLTAEVMAYLHTMNAGILEQWNFGLSPPPNGTLEDKYRYVQSQAITCQKPPPEKAKQDPYAKLSFWEVDLREKFSSELDQYPLGRKFLLQTGVQARSSVRVGRKRPASAATSSSKQKRSRKK</sequence>
<name>VL1_HPV44</name>
<comment type="function">
    <text evidence="1">Forms an icosahedral capsid with a T=7 symmetry and a 50 nm diameter. The capsid is composed of 72 pentamers linked to each other by disulfide bonds and associated with L2 proteins. Binds to heparan sulfate proteoglycans on cell surface of basal layer keratinocytes to provide initial virion attachment. This binding mediates a conformational change in the virus capsid that facilitates efficient infection. The virion enters the host cell via endocytosis. During virus trafficking, L1 protein dissociates from the viral DNA and the genomic DNA is released to the host nucleus. The virion assembly takes place within the cell nucleus. Encapsulates the genomic DNA together with protein L2.</text>
</comment>
<comment type="subunit">
    <text evidence="1">Self-assembles into homopentamers. The capsid has an icosahedral symmetry and consists of 72 capsomers, with each capsomer being a pentamer of L1. Interacts with the minor capsid protein L2; this interaction is necessary for viral genome encapsidation. Interacts with protein E2; this interaction enhances E2-dependent replication and transcription activation.</text>
</comment>
<comment type="subcellular location">
    <subcellularLocation>
        <location evidence="1">Virion</location>
    </subcellularLocation>
    <subcellularLocation>
        <location evidence="1">Host nucleus</location>
    </subcellularLocation>
</comment>
<comment type="similarity">
    <text evidence="1">Belongs to the papillomaviridae L1 protein family.</text>
</comment>
<reference key="1">
    <citation type="submission" date="1995-10" db="EMBL/GenBank/DDBJ databases">
        <authorList>
            <person name="Delius H."/>
        </authorList>
    </citation>
    <scope>NUCLEOTIDE SEQUENCE [GENOMIC DNA]</scope>
</reference>
<reference key="2">
    <citation type="journal article" date="1994" name="J. Infect. Dis.">
        <title>Identification and assessment of known and novel human papillomaviruses by polymerase chain reaction amplification, restriction fragment length polymorphisms, nucleotide sequence, and phylogenetic algorithms.</title>
        <authorList>
            <person name="Bernard H.U."/>
            <person name="Chan S.-Y."/>
            <person name="Manos M.M."/>
            <person name="Ong C.K."/>
            <person name="Villa L.L."/>
            <person name="Delius H."/>
            <person name="Peyton C.L."/>
            <person name="Bauer H.M."/>
            <person name="Wheeler C.M."/>
        </authorList>
    </citation>
    <scope>NUCLEOTIDE SEQUENCE [GENOMIC DNA] OF 312-462</scope>
</reference>
<accession>P50816</accession>
<accession>Q80919</accession>